<gene>
    <name evidence="1" type="primary">rpsS</name>
    <name type="ordered locus">YPK_0287</name>
</gene>
<reference key="1">
    <citation type="submission" date="2008-02" db="EMBL/GenBank/DDBJ databases">
        <title>Complete sequence of Yersinia pseudotuberculosis YPIII.</title>
        <authorList>
            <consortium name="US DOE Joint Genome Institute"/>
            <person name="Copeland A."/>
            <person name="Lucas S."/>
            <person name="Lapidus A."/>
            <person name="Glavina del Rio T."/>
            <person name="Dalin E."/>
            <person name="Tice H."/>
            <person name="Bruce D."/>
            <person name="Goodwin L."/>
            <person name="Pitluck S."/>
            <person name="Munk A.C."/>
            <person name="Brettin T."/>
            <person name="Detter J.C."/>
            <person name="Han C."/>
            <person name="Tapia R."/>
            <person name="Schmutz J."/>
            <person name="Larimer F."/>
            <person name="Land M."/>
            <person name="Hauser L."/>
            <person name="Challacombe J.F."/>
            <person name="Green L."/>
            <person name="Lindler L.E."/>
            <person name="Nikolich M.P."/>
            <person name="Richardson P."/>
        </authorList>
    </citation>
    <scope>NUCLEOTIDE SEQUENCE [LARGE SCALE GENOMIC DNA]</scope>
    <source>
        <strain>YPIII</strain>
    </source>
</reference>
<protein>
    <recommendedName>
        <fullName evidence="1">Small ribosomal subunit protein uS19</fullName>
    </recommendedName>
    <alternativeName>
        <fullName evidence="2">30S ribosomal protein S19</fullName>
    </alternativeName>
</protein>
<feature type="chain" id="PRO_1000128065" description="Small ribosomal subunit protein uS19">
    <location>
        <begin position="1"/>
        <end position="92"/>
    </location>
</feature>
<proteinExistence type="inferred from homology"/>
<dbReference type="EMBL" id="CP000950">
    <property type="protein sequence ID" value="ACA66600.1"/>
    <property type="molecule type" value="Genomic_DNA"/>
</dbReference>
<dbReference type="RefSeq" id="WP_002213430.1">
    <property type="nucleotide sequence ID" value="NZ_CP009792.1"/>
</dbReference>
<dbReference type="SMR" id="B1JIW5"/>
<dbReference type="GeneID" id="97454235"/>
<dbReference type="KEGG" id="ypy:YPK_0287"/>
<dbReference type="PATRIC" id="fig|502800.11.peg.894"/>
<dbReference type="GO" id="GO:0005737">
    <property type="term" value="C:cytoplasm"/>
    <property type="evidence" value="ECO:0007669"/>
    <property type="project" value="UniProtKB-ARBA"/>
</dbReference>
<dbReference type="GO" id="GO:0015935">
    <property type="term" value="C:small ribosomal subunit"/>
    <property type="evidence" value="ECO:0007669"/>
    <property type="project" value="InterPro"/>
</dbReference>
<dbReference type="GO" id="GO:0019843">
    <property type="term" value="F:rRNA binding"/>
    <property type="evidence" value="ECO:0007669"/>
    <property type="project" value="UniProtKB-UniRule"/>
</dbReference>
<dbReference type="GO" id="GO:0003735">
    <property type="term" value="F:structural constituent of ribosome"/>
    <property type="evidence" value="ECO:0007669"/>
    <property type="project" value="InterPro"/>
</dbReference>
<dbReference type="GO" id="GO:0000028">
    <property type="term" value="P:ribosomal small subunit assembly"/>
    <property type="evidence" value="ECO:0007669"/>
    <property type="project" value="TreeGrafter"/>
</dbReference>
<dbReference type="GO" id="GO:0006412">
    <property type="term" value="P:translation"/>
    <property type="evidence" value="ECO:0007669"/>
    <property type="project" value="UniProtKB-UniRule"/>
</dbReference>
<dbReference type="FunFam" id="3.30.860.10:FF:000001">
    <property type="entry name" value="30S ribosomal protein S19"/>
    <property type="match status" value="1"/>
</dbReference>
<dbReference type="Gene3D" id="3.30.860.10">
    <property type="entry name" value="30s Ribosomal Protein S19, Chain A"/>
    <property type="match status" value="1"/>
</dbReference>
<dbReference type="HAMAP" id="MF_00531">
    <property type="entry name" value="Ribosomal_uS19"/>
    <property type="match status" value="1"/>
</dbReference>
<dbReference type="InterPro" id="IPR002222">
    <property type="entry name" value="Ribosomal_uS19"/>
</dbReference>
<dbReference type="InterPro" id="IPR005732">
    <property type="entry name" value="Ribosomal_uS19_bac-type"/>
</dbReference>
<dbReference type="InterPro" id="IPR020934">
    <property type="entry name" value="Ribosomal_uS19_CS"/>
</dbReference>
<dbReference type="InterPro" id="IPR023575">
    <property type="entry name" value="Ribosomal_uS19_SF"/>
</dbReference>
<dbReference type="NCBIfam" id="TIGR01050">
    <property type="entry name" value="rpsS_bact"/>
    <property type="match status" value="1"/>
</dbReference>
<dbReference type="PANTHER" id="PTHR11880">
    <property type="entry name" value="RIBOSOMAL PROTEIN S19P FAMILY MEMBER"/>
    <property type="match status" value="1"/>
</dbReference>
<dbReference type="PANTHER" id="PTHR11880:SF8">
    <property type="entry name" value="SMALL RIBOSOMAL SUBUNIT PROTEIN US19M"/>
    <property type="match status" value="1"/>
</dbReference>
<dbReference type="Pfam" id="PF00203">
    <property type="entry name" value="Ribosomal_S19"/>
    <property type="match status" value="1"/>
</dbReference>
<dbReference type="PIRSF" id="PIRSF002144">
    <property type="entry name" value="Ribosomal_S19"/>
    <property type="match status" value="1"/>
</dbReference>
<dbReference type="PRINTS" id="PR00975">
    <property type="entry name" value="RIBOSOMALS19"/>
</dbReference>
<dbReference type="SUPFAM" id="SSF54570">
    <property type="entry name" value="Ribosomal protein S19"/>
    <property type="match status" value="1"/>
</dbReference>
<dbReference type="PROSITE" id="PS00323">
    <property type="entry name" value="RIBOSOMAL_S19"/>
    <property type="match status" value="1"/>
</dbReference>
<sequence length="92" mass="10430">MPRSLKKGPFIDLHLLKKVEKAVESGDKKPIRTWSRRSTVFPNMIGLTIAVHNGRQHVPVFVSDEMVGHKLGEFAPTRTYRGHAADKKAKKR</sequence>
<comment type="function">
    <text evidence="1">Protein S19 forms a complex with S13 that binds strongly to the 16S ribosomal RNA.</text>
</comment>
<comment type="similarity">
    <text evidence="1">Belongs to the universal ribosomal protein uS19 family.</text>
</comment>
<keyword id="KW-0687">Ribonucleoprotein</keyword>
<keyword id="KW-0689">Ribosomal protein</keyword>
<keyword id="KW-0694">RNA-binding</keyword>
<keyword id="KW-0699">rRNA-binding</keyword>
<name>RS19_YERPY</name>
<evidence type="ECO:0000255" key="1">
    <source>
        <dbReference type="HAMAP-Rule" id="MF_00531"/>
    </source>
</evidence>
<evidence type="ECO:0000305" key="2"/>
<organism>
    <name type="scientific">Yersinia pseudotuberculosis serotype O:3 (strain YPIII)</name>
    <dbReference type="NCBI Taxonomy" id="502800"/>
    <lineage>
        <taxon>Bacteria</taxon>
        <taxon>Pseudomonadati</taxon>
        <taxon>Pseudomonadota</taxon>
        <taxon>Gammaproteobacteria</taxon>
        <taxon>Enterobacterales</taxon>
        <taxon>Yersiniaceae</taxon>
        <taxon>Yersinia</taxon>
    </lineage>
</organism>
<accession>B1JIW5</accession>